<gene>
    <name evidence="1" type="primary">ispH</name>
    <name type="ordered locus">DvMF_2020</name>
</gene>
<comment type="function">
    <text evidence="1">Catalyzes the conversion of 1-hydroxy-2-methyl-2-(E)-butenyl 4-diphosphate (HMBPP) into a mixture of isopentenyl diphosphate (IPP) and dimethylallyl diphosphate (DMAPP). Acts in the terminal step of the DOXP/MEP pathway for isoprenoid precursor biosynthesis.</text>
</comment>
<comment type="catalytic activity">
    <reaction evidence="1">
        <text>isopentenyl diphosphate + 2 oxidized [2Fe-2S]-[ferredoxin] + H2O = (2E)-4-hydroxy-3-methylbut-2-enyl diphosphate + 2 reduced [2Fe-2S]-[ferredoxin] + 2 H(+)</text>
        <dbReference type="Rhea" id="RHEA:24488"/>
        <dbReference type="Rhea" id="RHEA-COMP:10000"/>
        <dbReference type="Rhea" id="RHEA-COMP:10001"/>
        <dbReference type="ChEBI" id="CHEBI:15377"/>
        <dbReference type="ChEBI" id="CHEBI:15378"/>
        <dbReference type="ChEBI" id="CHEBI:33737"/>
        <dbReference type="ChEBI" id="CHEBI:33738"/>
        <dbReference type="ChEBI" id="CHEBI:128753"/>
        <dbReference type="ChEBI" id="CHEBI:128769"/>
        <dbReference type="EC" id="1.17.7.4"/>
    </reaction>
</comment>
<comment type="catalytic activity">
    <reaction evidence="1">
        <text>dimethylallyl diphosphate + 2 oxidized [2Fe-2S]-[ferredoxin] + H2O = (2E)-4-hydroxy-3-methylbut-2-enyl diphosphate + 2 reduced [2Fe-2S]-[ferredoxin] + 2 H(+)</text>
        <dbReference type="Rhea" id="RHEA:24825"/>
        <dbReference type="Rhea" id="RHEA-COMP:10000"/>
        <dbReference type="Rhea" id="RHEA-COMP:10001"/>
        <dbReference type="ChEBI" id="CHEBI:15377"/>
        <dbReference type="ChEBI" id="CHEBI:15378"/>
        <dbReference type="ChEBI" id="CHEBI:33737"/>
        <dbReference type="ChEBI" id="CHEBI:33738"/>
        <dbReference type="ChEBI" id="CHEBI:57623"/>
        <dbReference type="ChEBI" id="CHEBI:128753"/>
        <dbReference type="EC" id="1.17.7.4"/>
    </reaction>
</comment>
<comment type="cofactor">
    <cofactor evidence="1">
        <name>[4Fe-4S] cluster</name>
        <dbReference type="ChEBI" id="CHEBI:49883"/>
    </cofactor>
    <text evidence="1">Binds 1 [4Fe-4S] cluster per subunit.</text>
</comment>
<comment type="pathway">
    <text evidence="1">Isoprenoid biosynthesis; dimethylallyl diphosphate biosynthesis; dimethylallyl diphosphate from (2E)-4-hydroxy-3-methylbutenyl diphosphate: step 1/1.</text>
</comment>
<comment type="pathway">
    <text evidence="1">Isoprenoid biosynthesis; isopentenyl diphosphate biosynthesis via DXP pathway; isopentenyl diphosphate from 1-deoxy-D-xylulose 5-phosphate: step 6/6.</text>
</comment>
<comment type="similarity">
    <text evidence="1">Belongs to the IspH family.</text>
</comment>
<accession>B8DMK7</accession>
<protein>
    <recommendedName>
        <fullName evidence="1">4-hydroxy-3-methylbut-2-enyl diphosphate reductase</fullName>
        <shortName evidence="1">HMBPP reductase</shortName>
        <ecNumber evidence="1">1.17.7.4</ecNumber>
    </recommendedName>
</protein>
<proteinExistence type="inferred from homology"/>
<keyword id="KW-0004">4Fe-4S</keyword>
<keyword id="KW-0408">Iron</keyword>
<keyword id="KW-0411">Iron-sulfur</keyword>
<keyword id="KW-0414">Isoprene biosynthesis</keyword>
<keyword id="KW-0479">Metal-binding</keyword>
<keyword id="KW-0560">Oxidoreductase</keyword>
<feature type="chain" id="PRO_1000118604" description="4-hydroxy-3-methylbut-2-enyl diphosphate reductase">
    <location>
        <begin position="1"/>
        <end position="281"/>
    </location>
</feature>
<feature type="active site" description="Proton donor" evidence="1">
    <location>
        <position position="126"/>
    </location>
</feature>
<feature type="binding site" evidence="1">
    <location>
        <position position="12"/>
    </location>
    <ligand>
        <name>[4Fe-4S] cluster</name>
        <dbReference type="ChEBI" id="CHEBI:49883"/>
    </ligand>
</feature>
<feature type="binding site" evidence="1">
    <location>
        <position position="41"/>
    </location>
    <ligand>
        <name>(2E)-4-hydroxy-3-methylbut-2-enyl diphosphate</name>
        <dbReference type="ChEBI" id="CHEBI:128753"/>
    </ligand>
</feature>
<feature type="binding site" evidence="1">
    <location>
        <position position="41"/>
    </location>
    <ligand>
        <name>dimethylallyl diphosphate</name>
        <dbReference type="ChEBI" id="CHEBI:57623"/>
    </ligand>
</feature>
<feature type="binding site" evidence="1">
    <location>
        <position position="41"/>
    </location>
    <ligand>
        <name>isopentenyl diphosphate</name>
        <dbReference type="ChEBI" id="CHEBI:128769"/>
    </ligand>
</feature>
<feature type="binding site" evidence="1">
    <location>
        <position position="74"/>
    </location>
    <ligand>
        <name>(2E)-4-hydroxy-3-methylbut-2-enyl diphosphate</name>
        <dbReference type="ChEBI" id="CHEBI:128753"/>
    </ligand>
</feature>
<feature type="binding site" evidence="1">
    <location>
        <position position="74"/>
    </location>
    <ligand>
        <name>dimethylallyl diphosphate</name>
        <dbReference type="ChEBI" id="CHEBI:57623"/>
    </ligand>
</feature>
<feature type="binding site" evidence="1">
    <location>
        <position position="74"/>
    </location>
    <ligand>
        <name>isopentenyl diphosphate</name>
        <dbReference type="ChEBI" id="CHEBI:128769"/>
    </ligand>
</feature>
<feature type="binding site" evidence="1">
    <location>
        <position position="96"/>
    </location>
    <ligand>
        <name>[4Fe-4S] cluster</name>
        <dbReference type="ChEBI" id="CHEBI:49883"/>
    </ligand>
</feature>
<feature type="binding site" evidence="1">
    <location>
        <position position="124"/>
    </location>
    <ligand>
        <name>(2E)-4-hydroxy-3-methylbut-2-enyl diphosphate</name>
        <dbReference type="ChEBI" id="CHEBI:128753"/>
    </ligand>
</feature>
<feature type="binding site" evidence="1">
    <location>
        <position position="124"/>
    </location>
    <ligand>
        <name>dimethylallyl diphosphate</name>
        <dbReference type="ChEBI" id="CHEBI:57623"/>
    </ligand>
</feature>
<feature type="binding site" evidence="1">
    <location>
        <position position="124"/>
    </location>
    <ligand>
        <name>isopentenyl diphosphate</name>
        <dbReference type="ChEBI" id="CHEBI:128769"/>
    </ligand>
</feature>
<feature type="binding site" evidence="1">
    <location>
        <position position="164"/>
    </location>
    <ligand>
        <name>(2E)-4-hydroxy-3-methylbut-2-enyl diphosphate</name>
        <dbReference type="ChEBI" id="CHEBI:128753"/>
    </ligand>
</feature>
<feature type="binding site" evidence="1">
    <location>
        <position position="193"/>
    </location>
    <ligand>
        <name>[4Fe-4S] cluster</name>
        <dbReference type="ChEBI" id="CHEBI:49883"/>
    </ligand>
</feature>
<feature type="binding site" evidence="1">
    <location>
        <position position="221"/>
    </location>
    <ligand>
        <name>(2E)-4-hydroxy-3-methylbut-2-enyl diphosphate</name>
        <dbReference type="ChEBI" id="CHEBI:128753"/>
    </ligand>
</feature>
<feature type="binding site" evidence="1">
    <location>
        <position position="221"/>
    </location>
    <ligand>
        <name>dimethylallyl diphosphate</name>
        <dbReference type="ChEBI" id="CHEBI:57623"/>
    </ligand>
</feature>
<feature type="binding site" evidence="1">
    <location>
        <position position="221"/>
    </location>
    <ligand>
        <name>isopentenyl diphosphate</name>
        <dbReference type="ChEBI" id="CHEBI:128769"/>
    </ligand>
</feature>
<feature type="binding site" evidence="1">
    <location>
        <position position="223"/>
    </location>
    <ligand>
        <name>(2E)-4-hydroxy-3-methylbut-2-enyl diphosphate</name>
        <dbReference type="ChEBI" id="CHEBI:128753"/>
    </ligand>
</feature>
<feature type="binding site" evidence="1">
    <location>
        <position position="223"/>
    </location>
    <ligand>
        <name>dimethylallyl diphosphate</name>
        <dbReference type="ChEBI" id="CHEBI:57623"/>
    </ligand>
</feature>
<feature type="binding site" evidence="1">
    <location>
        <position position="223"/>
    </location>
    <ligand>
        <name>isopentenyl diphosphate</name>
        <dbReference type="ChEBI" id="CHEBI:128769"/>
    </ligand>
</feature>
<feature type="binding site" evidence="1">
    <location>
        <position position="265"/>
    </location>
    <ligand>
        <name>(2E)-4-hydroxy-3-methylbut-2-enyl diphosphate</name>
        <dbReference type="ChEBI" id="CHEBI:128753"/>
    </ligand>
</feature>
<feature type="binding site" evidence="1">
    <location>
        <position position="265"/>
    </location>
    <ligand>
        <name>dimethylallyl diphosphate</name>
        <dbReference type="ChEBI" id="CHEBI:57623"/>
    </ligand>
</feature>
<feature type="binding site" evidence="1">
    <location>
        <position position="265"/>
    </location>
    <ligand>
        <name>isopentenyl diphosphate</name>
        <dbReference type="ChEBI" id="CHEBI:128769"/>
    </ligand>
</feature>
<dbReference type="EC" id="1.17.7.4" evidence="1"/>
<dbReference type="EMBL" id="CP001197">
    <property type="protein sequence ID" value="ACL08963.1"/>
    <property type="molecule type" value="Genomic_DNA"/>
</dbReference>
<dbReference type="SMR" id="B8DMK7"/>
<dbReference type="STRING" id="883.DvMF_2020"/>
<dbReference type="KEGG" id="dvm:DvMF_2020"/>
<dbReference type="eggNOG" id="COG0761">
    <property type="taxonomic scope" value="Bacteria"/>
</dbReference>
<dbReference type="HOGENOM" id="CLU_027486_0_1_7"/>
<dbReference type="OrthoDB" id="9804068at2"/>
<dbReference type="UniPathway" id="UPA00056">
    <property type="reaction ID" value="UER00097"/>
</dbReference>
<dbReference type="UniPathway" id="UPA00059">
    <property type="reaction ID" value="UER00105"/>
</dbReference>
<dbReference type="GO" id="GO:0051539">
    <property type="term" value="F:4 iron, 4 sulfur cluster binding"/>
    <property type="evidence" value="ECO:0007669"/>
    <property type="project" value="UniProtKB-UniRule"/>
</dbReference>
<dbReference type="GO" id="GO:0051745">
    <property type="term" value="F:4-hydroxy-3-methylbut-2-enyl diphosphate reductase activity"/>
    <property type="evidence" value="ECO:0007669"/>
    <property type="project" value="UniProtKB-UniRule"/>
</dbReference>
<dbReference type="GO" id="GO:0046872">
    <property type="term" value="F:metal ion binding"/>
    <property type="evidence" value="ECO:0007669"/>
    <property type="project" value="UniProtKB-KW"/>
</dbReference>
<dbReference type="GO" id="GO:0050992">
    <property type="term" value="P:dimethylallyl diphosphate biosynthetic process"/>
    <property type="evidence" value="ECO:0007669"/>
    <property type="project" value="UniProtKB-UniRule"/>
</dbReference>
<dbReference type="GO" id="GO:0019288">
    <property type="term" value="P:isopentenyl diphosphate biosynthetic process, methylerythritol 4-phosphate pathway"/>
    <property type="evidence" value="ECO:0007669"/>
    <property type="project" value="UniProtKB-UniRule"/>
</dbReference>
<dbReference type="GO" id="GO:0016114">
    <property type="term" value="P:terpenoid biosynthetic process"/>
    <property type="evidence" value="ECO:0007669"/>
    <property type="project" value="UniProtKB-UniRule"/>
</dbReference>
<dbReference type="CDD" id="cd13944">
    <property type="entry name" value="lytB_ispH"/>
    <property type="match status" value="1"/>
</dbReference>
<dbReference type="Gene3D" id="3.40.50.11270">
    <property type="match status" value="1"/>
</dbReference>
<dbReference type="Gene3D" id="3.40.1010.20">
    <property type="entry name" value="4-hydroxy-3-methylbut-2-enyl diphosphate reductase, catalytic domain"/>
    <property type="match status" value="2"/>
</dbReference>
<dbReference type="HAMAP" id="MF_00191">
    <property type="entry name" value="IspH"/>
    <property type="match status" value="1"/>
</dbReference>
<dbReference type="InterPro" id="IPR003451">
    <property type="entry name" value="LytB/IspH"/>
</dbReference>
<dbReference type="NCBIfam" id="TIGR00216">
    <property type="entry name" value="ispH_lytB"/>
    <property type="match status" value="1"/>
</dbReference>
<dbReference type="PANTHER" id="PTHR30426">
    <property type="entry name" value="4-HYDROXY-3-METHYLBUT-2-ENYL DIPHOSPHATE REDUCTASE"/>
    <property type="match status" value="1"/>
</dbReference>
<dbReference type="PANTHER" id="PTHR30426:SF0">
    <property type="entry name" value="4-HYDROXY-3-METHYLBUT-2-ENYL DIPHOSPHATE REDUCTASE"/>
    <property type="match status" value="1"/>
</dbReference>
<dbReference type="Pfam" id="PF02401">
    <property type="entry name" value="LYTB"/>
    <property type="match status" value="1"/>
</dbReference>
<organism>
    <name type="scientific">Nitratidesulfovibrio vulgaris (strain DSM 19637 / Miyazaki F)</name>
    <name type="common">Desulfovibrio vulgaris</name>
    <dbReference type="NCBI Taxonomy" id="883"/>
    <lineage>
        <taxon>Bacteria</taxon>
        <taxon>Pseudomonadati</taxon>
        <taxon>Thermodesulfobacteriota</taxon>
        <taxon>Desulfovibrionia</taxon>
        <taxon>Desulfovibrionales</taxon>
        <taxon>Desulfovibrionaceae</taxon>
        <taxon>Nitratidesulfovibrio</taxon>
    </lineage>
</organism>
<name>ISPH_NITV9</name>
<evidence type="ECO:0000255" key="1">
    <source>
        <dbReference type="HAMAP-Rule" id="MF_00191"/>
    </source>
</evidence>
<sequence>MKIIRARTAGFCMGVSLALRKLDREVTENNAPIATLGPIIHNPQVMAHYEERGVRCLRDTAQVVPGQRVVIRAHGIPVAEETALKATGASVVDATCPKVKRAQLGIAEERGRGGTLLLFGEADHPEVRGLLSYAGEGAMVFGSLDELKGLPLRDDVAYFLAAQTTQDRAGFEDVVSWLRQRLGHDIPVLQTICDATRKRQQEAVDIARRVQAMVVVGGFDSGNTRRLADVARAQGVFTVHVETVDQLPVDELRKKSVIGLTAGASTPKSLIDAVQRFLESL</sequence>
<reference key="1">
    <citation type="submission" date="2008-10" db="EMBL/GenBank/DDBJ databases">
        <title>Complete sequence of Desulfovibrio vulgaris str. 'Miyazaki F'.</title>
        <authorList>
            <person name="Lucas S."/>
            <person name="Copeland A."/>
            <person name="Lapidus A."/>
            <person name="Glavina del Rio T."/>
            <person name="Dalin E."/>
            <person name="Tice H."/>
            <person name="Bruce D."/>
            <person name="Goodwin L."/>
            <person name="Pitluck S."/>
            <person name="Sims D."/>
            <person name="Brettin T."/>
            <person name="Detter J.C."/>
            <person name="Han C."/>
            <person name="Larimer F."/>
            <person name="Land M."/>
            <person name="Hauser L."/>
            <person name="Kyrpides N."/>
            <person name="Mikhailova N."/>
            <person name="Hazen T.C."/>
            <person name="Richardson P."/>
        </authorList>
    </citation>
    <scope>NUCLEOTIDE SEQUENCE [LARGE SCALE GENOMIC DNA]</scope>
    <source>
        <strain>DSM 19637 / Miyazaki F</strain>
    </source>
</reference>